<name>RL19_SERMA</name>
<comment type="function">
    <text evidence="1">This protein is located at the 30S-50S ribosomal subunit interface and may play a role in the structure and function of the aminoacyl-tRNA binding site.</text>
</comment>
<comment type="similarity">
    <text evidence="2">Belongs to the bacterial ribosomal protein bL19 family.</text>
</comment>
<reference key="1">
    <citation type="journal article" date="1994" name="Gene">
        <title>Sequences of the Serratia marcescens rplS and trmD genes.</title>
        <authorList>
            <person name="Jin S."/>
            <person name="Benedik M.J."/>
        </authorList>
    </citation>
    <scope>NUCLEOTIDE SEQUENCE [GENOMIC DNA]</scope>
    <source>
        <strain>SM6</strain>
    </source>
</reference>
<sequence>MSNIIKQLEQEQMKQDVPAFRPGDSVEVKVWVVEGSKKRLQAFERVVIAIRNRGLHSAFTVRKISNGEGVERVFQTHSPVIDSITVKRRGAVRKAKLYYLRERTGKAARIKERLNRVG</sequence>
<feature type="initiator methionine" description="Removed" evidence="1">
    <location>
        <position position="1"/>
    </location>
</feature>
<feature type="chain" id="PRO_0000163524" description="Large ribosomal subunit protein bL19">
    <location>
        <begin position="2"/>
        <end position="118"/>
    </location>
</feature>
<accession>P36243</accession>
<protein>
    <recommendedName>
        <fullName evidence="2">Large ribosomal subunit protein bL19</fullName>
    </recommendedName>
    <alternativeName>
        <fullName>50S ribosomal protein L19</fullName>
    </alternativeName>
</protein>
<proteinExistence type="inferred from homology"/>
<organism>
    <name type="scientific">Serratia marcescens</name>
    <dbReference type="NCBI Taxonomy" id="615"/>
    <lineage>
        <taxon>Bacteria</taxon>
        <taxon>Pseudomonadati</taxon>
        <taxon>Pseudomonadota</taxon>
        <taxon>Gammaproteobacteria</taxon>
        <taxon>Enterobacterales</taxon>
        <taxon>Yersiniaceae</taxon>
        <taxon>Serratia</taxon>
    </lineage>
</organism>
<dbReference type="EMBL" id="L23334">
    <property type="protein sequence ID" value="AAA50784.1"/>
    <property type="molecule type" value="Genomic_DNA"/>
</dbReference>
<dbReference type="SMR" id="P36243"/>
<dbReference type="STRING" id="273526.SMDB11_0174"/>
<dbReference type="GO" id="GO:0022625">
    <property type="term" value="C:cytosolic large ribosomal subunit"/>
    <property type="evidence" value="ECO:0007669"/>
    <property type="project" value="TreeGrafter"/>
</dbReference>
<dbReference type="GO" id="GO:0003735">
    <property type="term" value="F:structural constituent of ribosome"/>
    <property type="evidence" value="ECO:0007669"/>
    <property type="project" value="InterPro"/>
</dbReference>
<dbReference type="GO" id="GO:0006412">
    <property type="term" value="P:translation"/>
    <property type="evidence" value="ECO:0007669"/>
    <property type="project" value="UniProtKB-UniRule"/>
</dbReference>
<dbReference type="FunFam" id="2.30.30.790:FF:000001">
    <property type="entry name" value="50S ribosomal protein L19"/>
    <property type="match status" value="1"/>
</dbReference>
<dbReference type="Gene3D" id="2.30.30.790">
    <property type="match status" value="1"/>
</dbReference>
<dbReference type="HAMAP" id="MF_00402">
    <property type="entry name" value="Ribosomal_bL19"/>
    <property type="match status" value="1"/>
</dbReference>
<dbReference type="InterPro" id="IPR001857">
    <property type="entry name" value="Ribosomal_bL19"/>
</dbReference>
<dbReference type="InterPro" id="IPR018257">
    <property type="entry name" value="Ribosomal_bL19_CS"/>
</dbReference>
<dbReference type="InterPro" id="IPR038657">
    <property type="entry name" value="Ribosomal_bL19_sf"/>
</dbReference>
<dbReference type="InterPro" id="IPR008991">
    <property type="entry name" value="Translation_prot_SH3-like_sf"/>
</dbReference>
<dbReference type="NCBIfam" id="TIGR01024">
    <property type="entry name" value="rplS_bact"/>
    <property type="match status" value="1"/>
</dbReference>
<dbReference type="PANTHER" id="PTHR15680:SF9">
    <property type="entry name" value="LARGE RIBOSOMAL SUBUNIT PROTEIN BL19M"/>
    <property type="match status" value="1"/>
</dbReference>
<dbReference type="PANTHER" id="PTHR15680">
    <property type="entry name" value="RIBOSOMAL PROTEIN L19"/>
    <property type="match status" value="1"/>
</dbReference>
<dbReference type="Pfam" id="PF01245">
    <property type="entry name" value="Ribosomal_L19"/>
    <property type="match status" value="1"/>
</dbReference>
<dbReference type="PIRSF" id="PIRSF002191">
    <property type="entry name" value="Ribosomal_L19"/>
    <property type="match status" value="1"/>
</dbReference>
<dbReference type="PRINTS" id="PR00061">
    <property type="entry name" value="RIBOSOMALL19"/>
</dbReference>
<dbReference type="SUPFAM" id="SSF50104">
    <property type="entry name" value="Translation proteins SH3-like domain"/>
    <property type="match status" value="1"/>
</dbReference>
<dbReference type="PROSITE" id="PS01015">
    <property type="entry name" value="RIBOSOMAL_L19"/>
    <property type="match status" value="1"/>
</dbReference>
<keyword id="KW-0687">Ribonucleoprotein</keyword>
<keyword id="KW-0689">Ribosomal protein</keyword>
<gene>
    <name type="primary">rplS</name>
</gene>
<evidence type="ECO:0000250" key="1"/>
<evidence type="ECO:0000305" key="2"/>